<comment type="function">
    <text evidence="4">Snake venom phospholipase A2 (PLA2) that shows a moderate inhibition of ADP-induced human platelet aggregation when tested on platelet rich plasma. Exhibits high hydrolytic activities and prefers the anionic micelles (dPPC with deoxycholate) to the zwitterionic micelles (dPPC with Triton X-100). PLA2 catalyzes the calcium-dependent hydrolysis of the 2-acyl groups in 3-sn-phosphoglycerides.</text>
</comment>
<comment type="catalytic activity">
    <reaction evidence="2 3">
        <text>a 1,2-diacyl-sn-glycero-3-phosphocholine + H2O = a 1-acyl-sn-glycero-3-phosphocholine + a fatty acid + H(+)</text>
        <dbReference type="Rhea" id="RHEA:15801"/>
        <dbReference type="ChEBI" id="CHEBI:15377"/>
        <dbReference type="ChEBI" id="CHEBI:15378"/>
        <dbReference type="ChEBI" id="CHEBI:28868"/>
        <dbReference type="ChEBI" id="CHEBI:57643"/>
        <dbReference type="ChEBI" id="CHEBI:58168"/>
        <dbReference type="EC" id="3.1.1.4"/>
    </reaction>
</comment>
<comment type="cofactor">
    <cofactor evidence="1">
        <name>Ca(2+)</name>
        <dbReference type="ChEBI" id="CHEBI:29108"/>
    </cofactor>
    <text evidence="1">Binds 1 Ca(2+) ion.</text>
</comment>
<comment type="subcellular location">
    <subcellularLocation>
        <location>Secreted</location>
    </subcellularLocation>
</comment>
<comment type="tissue specificity">
    <text>Expressed by the venom gland.</text>
</comment>
<comment type="mass spectrometry" mass="13939.0" method="Electrospray" evidence="4"/>
<comment type="similarity">
    <text evidence="5">Belongs to the phospholipase A2 family. Group II subfamily. D49 sub-subfamily.</text>
</comment>
<comment type="caution">
    <text evidence="5">According to PubMed:12959640, T.stejnegeri was formerly named T.gramineus, supposing that this protein is the same as PLA-VI from T.gramineus. They have been kept separated, because T.gramineus and T.stejnegeri are considered as being two different species (see http://reptile-database.org).</text>
</comment>
<name>PA2AF_TRIST</name>
<keyword id="KW-0106">Calcium</keyword>
<keyword id="KW-0903">Direct protein sequencing</keyword>
<keyword id="KW-1015">Disulfide bond</keyword>
<keyword id="KW-1199">Hemostasis impairing toxin</keyword>
<keyword id="KW-0378">Hydrolase</keyword>
<keyword id="KW-0442">Lipid degradation</keyword>
<keyword id="KW-0443">Lipid metabolism</keyword>
<keyword id="KW-0479">Metal-binding</keyword>
<keyword id="KW-1201">Platelet aggregation inhibiting toxin</keyword>
<keyword id="KW-0964">Secreted</keyword>
<keyword id="KW-0732">Signal</keyword>
<keyword id="KW-0800">Toxin</keyword>
<reference key="1">
    <citation type="journal article" date="2004" name="Biochem. J.">
        <title>Venom phospholipases A2 of bamboo viper (Trimeresurus stejnegeri): molecular characterization, geographic variations and evidence of multiple ancestries.</title>
        <authorList>
            <person name="Tsai I.-H."/>
            <person name="Wang Y.-M."/>
            <person name="Chen Y.-H."/>
            <person name="Tsai T.-S."/>
            <person name="Tu M.-C."/>
        </authorList>
    </citation>
    <scope>NUCLEOTIDE SEQUENCE [MRNA]</scope>
    <scope>PROTEIN SEQUENCE OF 17-39</scope>
    <scope>FUNCTION</scope>
    <scope>MASS SPECTROMETRY</scope>
    <source>
        <strain>Chinese</strain>
        <strain>Taiwan</strain>
        <tissue>Venom</tissue>
        <tissue>Venom gland</tissue>
    </source>
</reference>
<proteinExistence type="evidence at protein level"/>
<sequence length="138" mass="15707">MRALWIMAVLLLGVEGHLMQFENMIKKVTGRSGIWWYGSYGCYCGKGGQGLPQDASDRCCFVHDCCYGKVNGCDPKDDFYVYSSENRDIVCGEDNPCTKEICECDKAAAICFRDNMDTYQNKYWFYPSSNCNEESEPC</sequence>
<organism>
    <name type="scientific">Trimeresurus stejnegeri</name>
    <name type="common">Chinese green tree viper</name>
    <name type="synonym">Viridovipera stejnegeri</name>
    <dbReference type="NCBI Taxonomy" id="39682"/>
    <lineage>
        <taxon>Eukaryota</taxon>
        <taxon>Metazoa</taxon>
        <taxon>Chordata</taxon>
        <taxon>Craniata</taxon>
        <taxon>Vertebrata</taxon>
        <taxon>Euteleostomi</taxon>
        <taxon>Lepidosauria</taxon>
        <taxon>Squamata</taxon>
        <taxon>Bifurcata</taxon>
        <taxon>Unidentata</taxon>
        <taxon>Episquamata</taxon>
        <taxon>Toxicofera</taxon>
        <taxon>Serpentes</taxon>
        <taxon>Colubroidea</taxon>
        <taxon>Viperidae</taxon>
        <taxon>Crotalinae</taxon>
        <taxon>Trimeresurus</taxon>
    </lineage>
</organism>
<accession>Q6H3C8</accession>
<dbReference type="EC" id="3.1.1.4"/>
<dbReference type="EMBL" id="AY211941">
    <property type="protein sequence ID" value="AAP48899.1"/>
    <property type="molecule type" value="mRNA"/>
</dbReference>
<dbReference type="SMR" id="Q6H3C8"/>
<dbReference type="GO" id="GO:0005576">
    <property type="term" value="C:extracellular region"/>
    <property type="evidence" value="ECO:0007669"/>
    <property type="project" value="UniProtKB-SubCell"/>
</dbReference>
<dbReference type="GO" id="GO:0005509">
    <property type="term" value="F:calcium ion binding"/>
    <property type="evidence" value="ECO:0007669"/>
    <property type="project" value="InterPro"/>
</dbReference>
<dbReference type="GO" id="GO:0047498">
    <property type="term" value="F:calcium-dependent phospholipase A2 activity"/>
    <property type="evidence" value="ECO:0007669"/>
    <property type="project" value="TreeGrafter"/>
</dbReference>
<dbReference type="GO" id="GO:0005543">
    <property type="term" value="F:phospholipid binding"/>
    <property type="evidence" value="ECO:0007669"/>
    <property type="project" value="TreeGrafter"/>
</dbReference>
<dbReference type="GO" id="GO:0090729">
    <property type="term" value="F:toxin activity"/>
    <property type="evidence" value="ECO:0007669"/>
    <property type="project" value="UniProtKB-KW"/>
</dbReference>
<dbReference type="GO" id="GO:0050482">
    <property type="term" value="P:arachidonate secretion"/>
    <property type="evidence" value="ECO:0007669"/>
    <property type="project" value="InterPro"/>
</dbReference>
<dbReference type="GO" id="GO:0016042">
    <property type="term" value="P:lipid catabolic process"/>
    <property type="evidence" value="ECO:0007669"/>
    <property type="project" value="UniProtKB-KW"/>
</dbReference>
<dbReference type="GO" id="GO:0042130">
    <property type="term" value="P:negative regulation of T cell proliferation"/>
    <property type="evidence" value="ECO:0007669"/>
    <property type="project" value="TreeGrafter"/>
</dbReference>
<dbReference type="GO" id="GO:0006644">
    <property type="term" value="P:phospholipid metabolic process"/>
    <property type="evidence" value="ECO:0007669"/>
    <property type="project" value="InterPro"/>
</dbReference>
<dbReference type="CDD" id="cd00125">
    <property type="entry name" value="PLA2c"/>
    <property type="match status" value="1"/>
</dbReference>
<dbReference type="FunFam" id="1.20.90.10:FF:000001">
    <property type="entry name" value="Basic phospholipase A2 homolog"/>
    <property type="match status" value="1"/>
</dbReference>
<dbReference type="Gene3D" id="1.20.90.10">
    <property type="entry name" value="Phospholipase A2 domain"/>
    <property type="match status" value="1"/>
</dbReference>
<dbReference type="InterPro" id="IPR001211">
    <property type="entry name" value="PLipase_A2"/>
</dbReference>
<dbReference type="InterPro" id="IPR033112">
    <property type="entry name" value="PLipase_A2_Asp_AS"/>
</dbReference>
<dbReference type="InterPro" id="IPR016090">
    <property type="entry name" value="PLipase_A2_dom"/>
</dbReference>
<dbReference type="InterPro" id="IPR036444">
    <property type="entry name" value="PLipase_A2_dom_sf"/>
</dbReference>
<dbReference type="InterPro" id="IPR033113">
    <property type="entry name" value="PLipase_A2_His_AS"/>
</dbReference>
<dbReference type="PANTHER" id="PTHR11716">
    <property type="entry name" value="PHOSPHOLIPASE A2 FAMILY MEMBER"/>
    <property type="match status" value="1"/>
</dbReference>
<dbReference type="PANTHER" id="PTHR11716:SF9">
    <property type="entry name" value="PHOSPHOLIPASE A2, MEMBRANE ASSOCIATED"/>
    <property type="match status" value="1"/>
</dbReference>
<dbReference type="Pfam" id="PF00068">
    <property type="entry name" value="Phospholip_A2_1"/>
    <property type="match status" value="1"/>
</dbReference>
<dbReference type="PRINTS" id="PR00389">
    <property type="entry name" value="PHPHLIPASEA2"/>
</dbReference>
<dbReference type="SMART" id="SM00085">
    <property type="entry name" value="PA2c"/>
    <property type="match status" value="1"/>
</dbReference>
<dbReference type="SUPFAM" id="SSF48619">
    <property type="entry name" value="Phospholipase A2, PLA2"/>
    <property type="match status" value="1"/>
</dbReference>
<dbReference type="PROSITE" id="PS00119">
    <property type="entry name" value="PA2_ASP"/>
    <property type="match status" value="1"/>
</dbReference>
<dbReference type="PROSITE" id="PS00118">
    <property type="entry name" value="PA2_HIS"/>
    <property type="match status" value="1"/>
</dbReference>
<feature type="signal peptide" evidence="4">
    <location>
        <begin position="1"/>
        <end position="16"/>
    </location>
</feature>
<feature type="chain" id="PRO_0000419070" description="Acidic phospholipase A2 Ts-A6">
    <location>
        <begin position="17"/>
        <end position="138"/>
    </location>
</feature>
<feature type="active site" evidence="1">
    <location>
        <position position="63"/>
    </location>
</feature>
<feature type="active site" evidence="1">
    <location>
        <position position="105"/>
    </location>
</feature>
<feature type="binding site" evidence="1">
    <location>
        <position position="43"/>
    </location>
    <ligand>
        <name>Ca(2+)</name>
        <dbReference type="ChEBI" id="CHEBI:29108"/>
    </ligand>
</feature>
<feature type="binding site" evidence="1">
    <location>
        <position position="45"/>
    </location>
    <ligand>
        <name>Ca(2+)</name>
        <dbReference type="ChEBI" id="CHEBI:29108"/>
    </ligand>
</feature>
<feature type="binding site" evidence="1">
    <location>
        <position position="47"/>
    </location>
    <ligand>
        <name>Ca(2+)</name>
        <dbReference type="ChEBI" id="CHEBI:29108"/>
    </ligand>
</feature>
<feature type="binding site" evidence="1">
    <location>
        <position position="64"/>
    </location>
    <ligand>
        <name>Ca(2+)</name>
        <dbReference type="ChEBI" id="CHEBI:29108"/>
    </ligand>
</feature>
<feature type="disulfide bond" evidence="1">
    <location>
        <begin position="42"/>
        <end position="131"/>
    </location>
</feature>
<feature type="disulfide bond" evidence="1">
    <location>
        <begin position="44"/>
        <end position="60"/>
    </location>
</feature>
<feature type="disulfide bond" evidence="1">
    <location>
        <begin position="59"/>
        <end position="111"/>
    </location>
</feature>
<feature type="disulfide bond" evidence="1">
    <location>
        <begin position="65"/>
        <end position="138"/>
    </location>
</feature>
<feature type="disulfide bond" evidence="1">
    <location>
        <begin position="66"/>
        <end position="104"/>
    </location>
</feature>
<feature type="disulfide bond" evidence="1">
    <location>
        <begin position="73"/>
        <end position="97"/>
    </location>
</feature>
<feature type="disulfide bond" evidence="1">
    <location>
        <begin position="91"/>
        <end position="102"/>
    </location>
</feature>
<protein>
    <recommendedName>
        <fullName>Acidic phospholipase A2 Ts-A6</fullName>
        <shortName>svPLA2</shortName>
        <ecNumber>3.1.1.4</ecNumber>
    </recommendedName>
    <alternativeName>
        <fullName>CTs-A6</fullName>
    </alternativeName>
    <alternativeName>
        <fullName>Phosphatidylcholine 2-acylhydrolase</fullName>
    </alternativeName>
</protein>
<evidence type="ECO:0000250" key="1"/>
<evidence type="ECO:0000255" key="2">
    <source>
        <dbReference type="PROSITE-ProRule" id="PRU10035"/>
    </source>
</evidence>
<evidence type="ECO:0000255" key="3">
    <source>
        <dbReference type="PROSITE-ProRule" id="PRU10036"/>
    </source>
</evidence>
<evidence type="ECO:0000269" key="4">
    <source>
    </source>
</evidence>
<evidence type="ECO:0000305" key="5"/>